<evidence type="ECO:0000250" key="1"/>
<evidence type="ECO:0000255" key="2"/>
<evidence type="ECO:0000305" key="3"/>
<protein>
    <recommendedName>
        <fullName>Endoplasmic reticulum vesicle protein 25</fullName>
    </recommendedName>
</protein>
<name>TMEDA_ASPFU</name>
<feature type="signal peptide" evidence="2">
    <location>
        <begin position="1"/>
        <end position="26"/>
    </location>
</feature>
<feature type="chain" id="PRO_0000237688" description="Endoplasmic reticulum vesicle protein 25">
    <location>
        <begin position="27"/>
        <end position="266"/>
    </location>
</feature>
<feature type="topological domain" description="Lumenal" evidence="2">
    <location>
        <begin position="27"/>
        <end position="188"/>
    </location>
</feature>
<feature type="transmembrane region" description="Helical" evidence="2">
    <location>
        <begin position="189"/>
        <end position="209"/>
    </location>
</feature>
<feature type="topological domain" description="Cytoplasmic" evidence="2">
    <location>
        <begin position="210"/>
        <end position="266"/>
    </location>
</feature>
<feature type="domain" description="GOLD">
    <location>
        <begin position="39"/>
        <end position="129"/>
    </location>
</feature>
<reference key="1">
    <citation type="journal article" date="2005" name="Nature">
        <title>Genomic sequence of the pathogenic and allergenic filamentous fungus Aspergillus fumigatus.</title>
        <authorList>
            <person name="Nierman W.C."/>
            <person name="Pain A."/>
            <person name="Anderson M.J."/>
            <person name="Wortman J.R."/>
            <person name="Kim H.S."/>
            <person name="Arroyo J."/>
            <person name="Berriman M."/>
            <person name="Abe K."/>
            <person name="Archer D.B."/>
            <person name="Bermejo C."/>
            <person name="Bennett J.W."/>
            <person name="Bowyer P."/>
            <person name="Chen D."/>
            <person name="Collins M."/>
            <person name="Coulsen R."/>
            <person name="Davies R."/>
            <person name="Dyer P.S."/>
            <person name="Farman M.L."/>
            <person name="Fedorova N."/>
            <person name="Fedorova N.D."/>
            <person name="Feldblyum T.V."/>
            <person name="Fischer R."/>
            <person name="Fosker N."/>
            <person name="Fraser A."/>
            <person name="Garcia J.L."/>
            <person name="Garcia M.J."/>
            <person name="Goble A."/>
            <person name="Goldman G.H."/>
            <person name="Gomi K."/>
            <person name="Griffith-Jones S."/>
            <person name="Gwilliam R."/>
            <person name="Haas B.J."/>
            <person name="Haas H."/>
            <person name="Harris D.E."/>
            <person name="Horiuchi H."/>
            <person name="Huang J."/>
            <person name="Humphray S."/>
            <person name="Jimenez J."/>
            <person name="Keller N."/>
            <person name="Khouri H."/>
            <person name="Kitamoto K."/>
            <person name="Kobayashi T."/>
            <person name="Konzack S."/>
            <person name="Kulkarni R."/>
            <person name="Kumagai T."/>
            <person name="Lafton A."/>
            <person name="Latge J.-P."/>
            <person name="Li W."/>
            <person name="Lord A."/>
            <person name="Lu C."/>
            <person name="Majoros W.H."/>
            <person name="May G.S."/>
            <person name="Miller B.L."/>
            <person name="Mohamoud Y."/>
            <person name="Molina M."/>
            <person name="Monod M."/>
            <person name="Mouyna I."/>
            <person name="Mulligan S."/>
            <person name="Murphy L.D."/>
            <person name="O'Neil S."/>
            <person name="Paulsen I."/>
            <person name="Penalva M.A."/>
            <person name="Pertea M."/>
            <person name="Price C."/>
            <person name="Pritchard B.L."/>
            <person name="Quail M.A."/>
            <person name="Rabbinowitsch E."/>
            <person name="Rawlins N."/>
            <person name="Rajandream M.A."/>
            <person name="Reichard U."/>
            <person name="Renauld H."/>
            <person name="Robson G.D."/>
            <person name="Rodriguez de Cordoba S."/>
            <person name="Rodriguez-Pena J.M."/>
            <person name="Ronning C.M."/>
            <person name="Rutter S."/>
            <person name="Salzberg S.L."/>
            <person name="Sanchez M."/>
            <person name="Sanchez-Ferrero J.C."/>
            <person name="Saunders D."/>
            <person name="Seeger K."/>
            <person name="Squares R."/>
            <person name="Squares S."/>
            <person name="Takeuchi M."/>
            <person name="Tekaia F."/>
            <person name="Turner G."/>
            <person name="Vazquez de Aldana C.R."/>
            <person name="Weidman J."/>
            <person name="White O."/>
            <person name="Woodward J.R."/>
            <person name="Yu J.-H."/>
            <person name="Fraser C.M."/>
            <person name="Galagan J.E."/>
            <person name="Asai K."/>
            <person name="Machida M."/>
            <person name="Hall N."/>
            <person name="Barrell B.G."/>
            <person name="Denning D.W."/>
        </authorList>
    </citation>
    <scope>NUCLEOTIDE SEQUENCE [LARGE SCALE GENOMIC DNA]</scope>
    <source>
        <strain>ATCC MYA-4609 / CBS 101355 / FGSC A1100 / Af293</strain>
    </source>
</reference>
<organism>
    <name type="scientific">Aspergillus fumigatus (strain ATCC MYA-4609 / CBS 101355 / FGSC A1100 / Af293)</name>
    <name type="common">Neosartorya fumigata</name>
    <dbReference type="NCBI Taxonomy" id="330879"/>
    <lineage>
        <taxon>Eukaryota</taxon>
        <taxon>Fungi</taxon>
        <taxon>Dikarya</taxon>
        <taxon>Ascomycota</taxon>
        <taxon>Pezizomycotina</taxon>
        <taxon>Eurotiomycetes</taxon>
        <taxon>Eurotiomycetidae</taxon>
        <taxon>Eurotiales</taxon>
        <taxon>Aspergillaceae</taxon>
        <taxon>Aspergillus</taxon>
        <taxon>Aspergillus subgen. Fumigati</taxon>
    </lineage>
</organism>
<keyword id="KW-0256">Endoplasmic reticulum</keyword>
<keyword id="KW-0931">ER-Golgi transport</keyword>
<keyword id="KW-0333">Golgi apparatus</keyword>
<keyword id="KW-0472">Membrane</keyword>
<keyword id="KW-0653">Protein transport</keyword>
<keyword id="KW-1185">Reference proteome</keyword>
<keyword id="KW-0732">Signal</keyword>
<keyword id="KW-0812">Transmembrane</keyword>
<keyword id="KW-1133">Transmembrane helix</keyword>
<keyword id="KW-0813">Transport</keyword>
<dbReference type="EMBL" id="AAHF01000005">
    <property type="protein sequence ID" value="EAL89474.1"/>
    <property type="molecule type" value="Genomic_DNA"/>
</dbReference>
<dbReference type="RefSeq" id="XP_751512.1">
    <property type="nucleotide sequence ID" value="XM_746419.1"/>
</dbReference>
<dbReference type="SMR" id="Q4WQL0"/>
<dbReference type="FunCoup" id="Q4WQL0">
    <property type="interactions" value="1144"/>
</dbReference>
<dbReference type="STRING" id="330879.Q4WQL0"/>
<dbReference type="EnsemblFungi" id="EAL89474">
    <property type="protein sequence ID" value="EAL89474"/>
    <property type="gene ID" value="AFUA_4G13190"/>
</dbReference>
<dbReference type="GeneID" id="3509456"/>
<dbReference type="KEGG" id="afm:AFUA_4G13190"/>
<dbReference type="VEuPathDB" id="FungiDB:Afu4g13190"/>
<dbReference type="eggNOG" id="KOG1691">
    <property type="taxonomic scope" value="Eukaryota"/>
</dbReference>
<dbReference type="HOGENOM" id="CLU_066963_3_0_1"/>
<dbReference type="InParanoid" id="Q4WQL0"/>
<dbReference type="OMA" id="DVFEACF"/>
<dbReference type="OrthoDB" id="759142at2759"/>
<dbReference type="Proteomes" id="UP000002530">
    <property type="component" value="Chromosome 4"/>
</dbReference>
<dbReference type="GO" id="GO:0030134">
    <property type="term" value="C:COPII-coated ER to Golgi transport vesicle"/>
    <property type="evidence" value="ECO:0000318"/>
    <property type="project" value="GO_Central"/>
</dbReference>
<dbReference type="GO" id="GO:0005783">
    <property type="term" value="C:endoplasmic reticulum"/>
    <property type="evidence" value="ECO:0000318"/>
    <property type="project" value="GO_Central"/>
</dbReference>
<dbReference type="GO" id="GO:0005789">
    <property type="term" value="C:endoplasmic reticulum membrane"/>
    <property type="evidence" value="ECO:0007669"/>
    <property type="project" value="UniProtKB-SubCell"/>
</dbReference>
<dbReference type="GO" id="GO:0005793">
    <property type="term" value="C:endoplasmic reticulum-Golgi intermediate compartment"/>
    <property type="evidence" value="ECO:0000318"/>
    <property type="project" value="GO_Central"/>
</dbReference>
<dbReference type="GO" id="GO:0005794">
    <property type="term" value="C:Golgi apparatus"/>
    <property type="evidence" value="ECO:0000318"/>
    <property type="project" value="GO_Central"/>
</dbReference>
<dbReference type="GO" id="GO:0000139">
    <property type="term" value="C:Golgi membrane"/>
    <property type="evidence" value="ECO:0007669"/>
    <property type="project" value="UniProtKB-SubCell"/>
</dbReference>
<dbReference type="GO" id="GO:0006888">
    <property type="term" value="P:endoplasmic reticulum to Golgi vesicle-mediated transport"/>
    <property type="evidence" value="ECO:0000318"/>
    <property type="project" value="GO_Central"/>
</dbReference>
<dbReference type="GO" id="GO:0007030">
    <property type="term" value="P:Golgi organization"/>
    <property type="evidence" value="ECO:0000318"/>
    <property type="project" value="GO_Central"/>
</dbReference>
<dbReference type="GO" id="GO:0006886">
    <property type="term" value="P:intracellular protein transport"/>
    <property type="evidence" value="ECO:0000318"/>
    <property type="project" value="GO_Central"/>
</dbReference>
<dbReference type="InterPro" id="IPR015720">
    <property type="entry name" value="Emp24-like"/>
</dbReference>
<dbReference type="InterPro" id="IPR009038">
    <property type="entry name" value="GOLD_dom"/>
</dbReference>
<dbReference type="PANTHER" id="PTHR22811">
    <property type="entry name" value="TRANSMEMBRANE EMP24 DOMAIN-CONTAINING PROTEIN"/>
    <property type="match status" value="1"/>
</dbReference>
<dbReference type="Pfam" id="PF01105">
    <property type="entry name" value="EMP24_GP25L"/>
    <property type="match status" value="1"/>
</dbReference>
<dbReference type="SMART" id="SM01190">
    <property type="entry name" value="EMP24_GP25L"/>
    <property type="match status" value="1"/>
</dbReference>
<accession>Q4WQL0</accession>
<comment type="function">
    <text evidence="1">Constituent of COPII-coated endoplasmic reticulum-derived transport vesicles. Required for efficient transport of a subset of secretory proteins to the Golgi. Facilitates retrograde transport from the Golgi to the endoplasmic reticulum (By similarity).</text>
</comment>
<comment type="subcellular location">
    <subcellularLocation>
        <location evidence="1">Endoplasmic reticulum membrane</location>
        <topology evidence="1">Single-pass type I membrane protein</topology>
    </subcellularLocation>
    <subcellularLocation>
        <location evidence="1">Golgi apparatus membrane</location>
        <topology evidence="1">Single-pass type I membrane protein</topology>
    </subcellularLocation>
    <text evidence="1">Recycles between endoplasmic reticulum and Golgi.</text>
</comment>
<comment type="similarity">
    <text evidence="3">Belongs to the EMP24/GP25L family.</text>
</comment>
<proteinExistence type="inferred from homology"/>
<gene>
    <name type="primary">erv25</name>
    <name type="ORF">AFUA_4G13190</name>
</gene>
<sequence>MGSSPQSSTRTLLGLLFLLLVQLSSALKFDLHASSGHNERCIRNFVFKDQLVVVTAIVSGQRGDGQVVNMHIKDALGNDHGRPKDIAGETRQAFTSVADTAFDVCFENKLVSHHGVANPYKSVELDVEIGADARDWSSVQAAEKLKPVETDLRRIEEMVAEIVNEMEYLRAREQKLRDTNESTNERVKWFAFGTMGMLVGLGVWQVVYLRAYFRYVDFPVSWRVDGVVANCCSCCEQVEASYLRSSRVVFWSPLVMWTRLSWLILR</sequence>